<accession>C6UPN3</accession>
<comment type="function">
    <text evidence="1">Hydrolyzes ureidoacrylate to form aminoacrylate and carbamate. The carbamate hydrolyzes spontaneously, thereby releasing one of the nitrogen atoms of the pyrimidine ring as ammonia and one of its carbon atoms as CO2.</text>
</comment>
<comment type="catalytic activity">
    <reaction evidence="1">
        <text>(Z)-3-ureidoacrylate + H2O + H(+) = (Z)-3-aminoacrylate + NH4(+) + CO2</text>
        <dbReference type="Rhea" id="RHEA:42624"/>
        <dbReference type="ChEBI" id="CHEBI:15377"/>
        <dbReference type="ChEBI" id="CHEBI:15378"/>
        <dbReference type="ChEBI" id="CHEBI:16526"/>
        <dbReference type="ChEBI" id="CHEBI:28938"/>
        <dbReference type="ChEBI" id="CHEBI:59891"/>
        <dbReference type="ChEBI" id="CHEBI:59894"/>
        <dbReference type="EC" id="3.5.1.110"/>
    </reaction>
</comment>
<comment type="catalytic activity">
    <reaction evidence="1">
        <text>(Z)-3-ureidoacrylate + H2O = (Z)-3-aminoacrylate + carbamate + H(+)</text>
        <dbReference type="Rhea" id="RHEA:31603"/>
        <dbReference type="ChEBI" id="CHEBI:13941"/>
        <dbReference type="ChEBI" id="CHEBI:15377"/>
        <dbReference type="ChEBI" id="CHEBI:15378"/>
        <dbReference type="ChEBI" id="CHEBI:59891"/>
        <dbReference type="ChEBI" id="CHEBI:59894"/>
    </reaction>
</comment>
<comment type="catalytic activity">
    <reaction evidence="1">
        <text>(Z)-2-methylureidoacrylate + H2O + H(+) = (Z)-2-methylaminoacrylate + NH4(+) + CO2</text>
        <dbReference type="Rhea" id="RHEA:42620"/>
        <dbReference type="ChEBI" id="CHEBI:15377"/>
        <dbReference type="ChEBI" id="CHEBI:15378"/>
        <dbReference type="ChEBI" id="CHEBI:16526"/>
        <dbReference type="ChEBI" id="CHEBI:28938"/>
        <dbReference type="ChEBI" id="CHEBI:143783"/>
        <dbReference type="ChEBI" id="CHEBI:145735"/>
        <dbReference type="EC" id="3.5.1.110"/>
    </reaction>
</comment>
<comment type="induction">
    <text evidence="1">Up-regulated by the nitrogen regulatory protein C (NtrC also called GlnG) and repressed by RutR.</text>
</comment>
<comment type="similarity">
    <text evidence="1">Belongs to the isochorismatase family. RutB subfamily.</text>
</comment>
<organism>
    <name type="scientific">Escherichia coli O157:H7 (strain TW14359 / EHEC)</name>
    <dbReference type="NCBI Taxonomy" id="544404"/>
    <lineage>
        <taxon>Bacteria</taxon>
        <taxon>Pseudomonadati</taxon>
        <taxon>Pseudomonadota</taxon>
        <taxon>Gammaproteobacteria</taxon>
        <taxon>Enterobacterales</taxon>
        <taxon>Enterobacteriaceae</taxon>
        <taxon>Escherichia</taxon>
    </lineage>
</organism>
<name>RUTB_ECO5T</name>
<keyword id="KW-0378">Hydrolase</keyword>
<dbReference type="EC" id="3.5.1.110" evidence="1"/>
<dbReference type="EMBL" id="CP001368">
    <property type="protein sequence ID" value="ACT71028.1"/>
    <property type="molecule type" value="Genomic_DNA"/>
</dbReference>
<dbReference type="RefSeq" id="WP_001303888.1">
    <property type="nucleotide sequence ID" value="NC_013008.1"/>
</dbReference>
<dbReference type="SMR" id="C6UPN3"/>
<dbReference type="KEGG" id="etw:ECSP_1180"/>
<dbReference type="HOGENOM" id="CLU_068979_8_0_6"/>
<dbReference type="GO" id="GO:0016811">
    <property type="term" value="F:hydrolase activity, acting on carbon-nitrogen (but not peptide) bonds, in linear amides"/>
    <property type="evidence" value="ECO:0007669"/>
    <property type="project" value="UniProtKB-UniRule"/>
</dbReference>
<dbReference type="GO" id="GO:0019740">
    <property type="term" value="P:nitrogen utilization"/>
    <property type="evidence" value="ECO:0007669"/>
    <property type="project" value="UniProtKB-UniRule"/>
</dbReference>
<dbReference type="GO" id="GO:0006212">
    <property type="term" value="P:uracil catabolic process"/>
    <property type="evidence" value="ECO:0007669"/>
    <property type="project" value="UniProtKB-UniRule"/>
</dbReference>
<dbReference type="CDD" id="cd00431">
    <property type="entry name" value="cysteine_hydrolases"/>
    <property type="match status" value="1"/>
</dbReference>
<dbReference type="FunFam" id="3.40.50.850:FF:000004">
    <property type="entry name" value="Peroxyureidoacrylate/ureidoacrylate amidohydrolase RutB"/>
    <property type="match status" value="1"/>
</dbReference>
<dbReference type="Gene3D" id="3.40.50.850">
    <property type="entry name" value="Isochorismatase-like"/>
    <property type="match status" value="1"/>
</dbReference>
<dbReference type="HAMAP" id="MF_00830">
    <property type="entry name" value="RutB"/>
    <property type="match status" value="1"/>
</dbReference>
<dbReference type="InterPro" id="IPR000868">
    <property type="entry name" value="Isochorismatase-like_dom"/>
</dbReference>
<dbReference type="InterPro" id="IPR050272">
    <property type="entry name" value="Isochorismatase-like_hydrls"/>
</dbReference>
<dbReference type="InterPro" id="IPR036380">
    <property type="entry name" value="Isochorismatase-like_sf"/>
</dbReference>
<dbReference type="InterPro" id="IPR019916">
    <property type="entry name" value="RutB"/>
</dbReference>
<dbReference type="NCBIfam" id="TIGR03614">
    <property type="entry name" value="RutB"/>
    <property type="match status" value="1"/>
</dbReference>
<dbReference type="PANTHER" id="PTHR43540:SF6">
    <property type="entry name" value="ISOCHORISMATASE-LIKE DOMAIN-CONTAINING PROTEIN"/>
    <property type="match status" value="1"/>
</dbReference>
<dbReference type="PANTHER" id="PTHR43540">
    <property type="entry name" value="PEROXYUREIDOACRYLATE/UREIDOACRYLATE AMIDOHYDROLASE-RELATED"/>
    <property type="match status" value="1"/>
</dbReference>
<dbReference type="Pfam" id="PF00857">
    <property type="entry name" value="Isochorismatase"/>
    <property type="match status" value="1"/>
</dbReference>
<dbReference type="SUPFAM" id="SSF52499">
    <property type="entry name" value="Isochorismatase-like hydrolases"/>
    <property type="match status" value="1"/>
</dbReference>
<proteinExistence type="inferred from homology"/>
<sequence length="230" mass="25287">MTTLTARPEAITFDPQQSALIVVDMQNAYATPGGYLDLAGFDVSTTRPVIANIQTAVTAARAAGMLIIWFQNGWDEQYVEAGGPGSPNFHKSNALKTMRKQPQLQGKLLAKGSWDYQLVDELVPQPGDIVLPKPRYSGFFNTPLDSILRSRGIRHLVFTSIATNVCVESTLRDGFFLEYFGVVLEDATHQAGPEFVQKAALFNIETFFGWVSDVETFCDALSPTSFARIA</sequence>
<protein>
    <recommendedName>
        <fullName evidence="1">Ureidoacrylate amidohydrolase RutB</fullName>
        <ecNumber evidence="1">3.5.1.110</ecNumber>
    </recommendedName>
</protein>
<feature type="chain" id="PRO_0000402673" description="Ureidoacrylate amidohydrolase RutB">
    <location>
        <begin position="1"/>
        <end position="230"/>
    </location>
</feature>
<feature type="active site" description="Proton acceptor" evidence="1">
    <location>
        <position position="24"/>
    </location>
</feature>
<feature type="active site" evidence="1">
    <location>
        <position position="133"/>
    </location>
</feature>
<feature type="active site" description="Nucleophile" evidence="1">
    <location>
        <position position="166"/>
    </location>
</feature>
<gene>
    <name evidence="1" type="primary">rutB</name>
    <name type="ordered locus">ECSP_1180</name>
</gene>
<reference key="1">
    <citation type="journal article" date="2009" name="Infect. Immun.">
        <title>Analysis of the genome of the Escherichia coli O157:H7 2006 spinach-associated outbreak isolate indicates candidate genes that may enhance virulence.</title>
        <authorList>
            <person name="Kulasekara B.R."/>
            <person name="Jacobs M."/>
            <person name="Zhou Y."/>
            <person name="Wu Z."/>
            <person name="Sims E."/>
            <person name="Saenphimmachak C."/>
            <person name="Rohmer L."/>
            <person name="Ritchie J.M."/>
            <person name="Radey M."/>
            <person name="McKevitt M."/>
            <person name="Freeman T.L."/>
            <person name="Hayden H."/>
            <person name="Haugen E."/>
            <person name="Gillett W."/>
            <person name="Fong C."/>
            <person name="Chang J."/>
            <person name="Beskhlebnaya V."/>
            <person name="Waldor M.K."/>
            <person name="Samadpour M."/>
            <person name="Whittam T.S."/>
            <person name="Kaul R."/>
            <person name="Brittnacher M."/>
            <person name="Miller S.I."/>
        </authorList>
    </citation>
    <scope>NUCLEOTIDE SEQUENCE [LARGE SCALE GENOMIC DNA]</scope>
    <source>
        <strain>TW14359 / EHEC</strain>
    </source>
</reference>
<evidence type="ECO:0000255" key="1">
    <source>
        <dbReference type="HAMAP-Rule" id="MF_00830"/>
    </source>
</evidence>